<organism>
    <name type="scientific">Arabidopsis thaliana</name>
    <name type="common">Mouse-ear cress</name>
    <dbReference type="NCBI Taxonomy" id="3702"/>
    <lineage>
        <taxon>Eukaryota</taxon>
        <taxon>Viridiplantae</taxon>
        <taxon>Streptophyta</taxon>
        <taxon>Embryophyta</taxon>
        <taxon>Tracheophyta</taxon>
        <taxon>Spermatophyta</taxon>
        <taxon>Magnoliopsida</taxon>
        <taxon>eudicotyledons</taxon>
        <taxon>Gunneridae</taxon>
        <taxon>Pentapetalae</taxon>
        <taxon>rosids</taxon>
        <taxon>malvids</taxon>
        <taxon>Brassicales</taxon>
        <taxon>Brassicaceae</taxon>
        <taxon>Camelineae</taxon>
        <taxon>Arabidopsis</taxon>
    </lineage>
</organism>
<sequence length="310" mass="33655">MATVQLSTQFSCQTRVSISPNSKSISKPPFLVPVTSIIHRPMISTGGIAVSPRRVFKVRATDTGEIGSALLAAEEAIEDVEETERLKRSLVDSLYGTDRGLSASSETRAEIGDLITQLESKNPTPAPTEALFLLNGKWILAYTSFVNLFPLLSRGIVPLIKVDEISQTIDSDNFTVQNSVRFAGPLGTNSISTNAKFEIRSPKRVQIKFEQGVIGTPQLTDSIEIPEYVEVLGQKIDLNPIRGLLTSVQDTASSVARTISSQPPLKFSLPADNAQSWLLTTYLDKDIRISRGDGGSVFVLIKEGSPLLNP</sequence>
<name>PAP2_ARATH</name>
<protein>
    <recommendedName>
        <fullName>Probable plastid-lipid-associated protein 2, chloroplastic</fullName>
        <shortName>AtPap2</shortName>
    </recommendedName>
    <alternativeName>
        <fullName>Fibrillin-1b</fullName>
    </alternativeName>
</protein>
<comment type="function">
    <text evidence="4">Probably involved in light/cold stress-related jasmonate (JA) biosynthesis.</text>
</comment>
<comment type="subcellular location">
    <subcellularLocation>
        <location evidence="3 5">Plastid</location>
        <location evidence="3 5">Chloroplast</location>
        <location evidence="3 5">Plastoglobule</location>
    </subcellularLocation>
</comment>
<comment type="miscellaneous">
    <text evidence="7">Simultaneous down-regulation of PAP1, PAP2 and PAP3 leads to impaired long-term acclimation to environmental constraint, namely photooxidative stress imposed by high light combined with cold.</text>
</comment>
<comment type="similarity">
    <text evidence="6">Belongs to the PAP/fibrillin family.</text>
</comment>
<gene>
    <name type="primary">PAP2</name>
    <name type="synonym">FBN1b</name>
    <name type="synonym">FIB1b</name>
    <name type="ordered locus">At4g22240</name>
    <name type="ORF">T10I14.70</name>
</gene>
<evidence type="ECO:0000250" key="1">
    <source>
        <dbReference type="UniProtKB" id="O81439"/>
    </source>
</evidence>
<evidence type="ECO:0000255" key="2"/>
<evidence type="ECO:0000269" key="3">
    <source>
    </source>
</evidence>
<evidence type="ECO:0000269" key="4">
    <source>
    </source>
</evidence>
<evidence type="ECO:0000269" key="5">
    <source>
    </source>
</evidence>
<evidence type="ECO:0000305" key="6"/>
<evidence type="ECO:0000305" key="7">
    <source>
    </source>
</evidence>
<proteinExistence type="evidence at protein level"/>
<accession>O49629</accession>
<accession>Q8LFZ5</accession>
<accession>Q8VXU7</accession>
<reference key="1">
    <citation type="journal article" date="1999" name="Nature">
        <title>Sequence and analysis of chromosome 4 of the plant Arabidopsis thaliana.</title>
        <authorList>
            <person name="Mayer K.F.X."/>
            <person name="Schueller C."/>
            <person name="Wambutt R."/>
            <person name="Murphy G."/>
            <person name="Volckaert G."/>
            <person name="Pohl T."/>
            <person name="Duesterhoeft A."/>
            <person name="Stiekema W."/>
            <person name="Entian K.-D."/>
            <person name="Terryn N."/>
            <person name="Harris B."/>
            <person name="Ansorge W."/>
            <person name="Brandt P."/>
            <person name="Grivell L.A."/>
            <person name="Rieger M."/>
            <person name="Weichselgartner M."/>
            <person name="de Simone V."/>
            <person name="Obermaier B."/>
            <person name="Mache R."/>
            <person name="Mueller M."/>
            <person name="Kreis M."/>
            <person name="Delseny M."/>
            <person name="Puigdomenech P."/>
            <person name="Watson M."/>
            <person name="Schmidtheini T."/>
            <person name="Reichert B."/>
            <person name="Portetelle D."/>
            <person name="Perez-Alonso M."/>
            <person name="Boutry M."/>
            <person name="Bancroft I."/>
            <person name="Vos P."/>
            <person name="Hoheisel J."/>
            <person name="Zimmermann W."/>
            <person name="Wedler H."/>
            <person name="Ridley P."/>
            <person name="Langham S.-A."/>
            <person name="McCullagh B."/>
            <person name="Bilham L."/>
            <person name="Robben J."/>
            <person name="van der Schueren J."/>
            <person name="Grymonprez B."/>
            <person name="Chuang Y.-J."/>
            <person name="Vandenbussche F."/>
            <person name="Braeken M."/>
            <person name="Weltjens I."/>
            <person name="Voet M."/>
            <person name="Bastiaens I."/>
            <person name="Aert R."/>
            <person name="Defoor E."/>
            <person name="Weitzenegger T."/>
            <person name="Bothe G."/>
            <person name="Ramsperger U."/>
            <person name="Hilbert H."/>
            <person name="Braun M."/>
            <person name="Holzer E."/>
            <person name="Brandt A."/>
            <person name="Peters S."/>
            <person name="van Staveren M."/>
            <person name="Dirkse W."/>
            <person name="Mooijman P."/>
            <person name="Klein Lankhorst R."/>
            <person name="Rose M."/>
            <person name="Hauf J."/>
            <person name="Koetter P."/>
            <person name="Berneiser S."/>
            <person name="Hempel S."/>
            <person name="Feldpausch M."/>
            <person name="Lamberth S."/>
            <person name="Van den Daele H."/>
            <person name="De Keyser A."/>
            <person name="Buysshaert C."/>
            <person name="Gielen J."/>
            <person name="Villarroel R."/>
            <person name="De Clercq R."/>
            <person name="van Montagu M."/>
            <person name="Rogers J."/>
            <person name="Cronin A."/>
            <person name="Quail M.A."/>
            <person name="Bray-Allen S."/>
            <person name="Clark L."/>
            <person name="Doggett J."/>
            <person name="Hall S."/>
            <person name="Kay M."/>
            <person name="Lennard N."/>
            <person name="McLay K."/>
            <person name="Mayes R."/>
            <person name="Pettett A."/>
            <person name="Rajandream M.A."/>
            <person name="Lyne M."/>
            <person name="Benes V."/>
            <person name="Rechmann S."/>
            <person name="Borkova D."/>
            <person name="Bloecker H."/>
            <person name="Scharfe M."/>
            <person name="Grimm M."/>
            <person name="Loehnert T.-H."/>
            <person name="Dose S."/>
            <person name="de Haan M."/>
            <person name="Maarse A.C."/>
            <person name="Schaefer M."/>
            <person name="Mueller-Auer S."/>
            <person name="Gabel C."/>
            <person name="Fuchs M."/>
            <person name="Fartmann B."/>
            <person name="Granderath K."/>
            <person name="Dauner D."/>
            <person name="Herzl A."/>
            <person name="Neumann S."/>
            <person name="Argiriou A."/>
            <person name="Vitale D."/>
            <person name="Liguori R."/>
            <person name="Piravandi E."/>
            <person name="Massenet O."/>
            <person name="Quigley F."/>
            <person name="Clabauld G."/>
            <person name="Muendlein A."/>
            <person name="Felber R."/>
            <person name="Schnabl S."/>
            <person name="Hiller R."/>
            <person name="Schmidt W."/>
            <person name="Lecharny A."/>
            <person name="Aubourg S."/>
            <person name="Chefdor F."/>
            <person name="Cooke R."/>
            <person name="Berger C."/>
            <person name="Monfort A."/>
            <person name="Casacuberta E."/>
            <person name="Gibbons T."/>
            <person name="Weber N."/>
            <person name="Vandenbol M."/>
            <person name="Bargues M."/>
            <person name="Terol J."/>
            <person name="Torres A."/>
            <person name="Perez-Perez A."/>
            <person name="Purnelle B."/>
            <person name="Bent E."/>
            <person name="Johnson S."/>
            <person name="Tacon D."/>
            <person name="Jesse T."/>
            <person name="Heijnen L."/>
            <person name="Schwarz S."/>
            <person name="Scholler P."/>
            <person name="Heber S."/>
            <person name="Francs P."/>
            <person name="Bielke C."/>
            <person name="Frishman D."/>
            <person name="Haase D."/>
            <person name="Lemcke K."/>
            <person name="Mewes H.-W."/>
            <person name="Stocker S."/>
            <person name="Zaccaria P."/>
            <person name="Bevan M."/>
            <person name="Wilson R.K."/>
            <person name="de la Bastide M."/>
            <person name="Habermann K."/>
            <person name="Parnell L."/>
            <person name="Dedhia N."/>
            <person name="Gnoj L."/>
            <person name="Schutz K."/>
            <person name="Huang E."/>
            <person name="Spiegel L."/>
            <person name="Sekhon M."/>
            <person name="Murray J."/>
            <person name="Sheet P."/>
            <person name="Cordes M."/>
            <person name="Abu-Threideh J."/>
            <person name="Stoneking T."/>
            <person name="Kalicki J."/>
            <person name="Graves T."/>
            <person name="Harmon G."/>
            <person name="Edwards J."/>
            <person name="Latreille P."/>
            <person name="Courtney L."/>
            <person name="Cloud J."/>
            <person name="Abbott A."/>
            <person name="Scott K."/>
            <person name="Johnson D."/>
            <person name="Minx P."/>
            <person name="Bentley D."/>
            <person name="Fulton B."/>
            <person name="Miller N."/>
            <person name="Greco T."/>
            <person name="Kemp K."/>
            <person name="Kramer J."/>
            <person name="Fulton L."/>
            <person name="Mardis E."/>
            <person name="Dante M."/>
            <person name="Pepin K."/>
            <person name="Hillier L.W."/>
            <person name="Nelson J."/>
            <person name="Spieth J."/>
            <person name="Ryan E."/>
            <person name="Andrews S."/>
            <person name="Geisel C."/>
            <person name="Layman D."/>
            <person name="Du H."/>
            <person name="Ali J."/>
            <person name="Berghoff A."/>
            <person name="Jones K."/>
            <person name="Drone K."/>
            <person name="Cotton M."/>
            <person name="Joshu C."/>
            <person name="Antonoiu B."/>
            <person name="Zidanic M."/>
            <person name="Strong C."/>
            <person name="Sun H."/>
            <person name="Lamar B."/>
            <person name="Yordan C."/>
            <person name="Ma P."/>
            <person name="Zhong J."/>
            <person name="Preston R."/>
            <person name="Vil D."/>
            <person name="Shekher M."/>
            <person name="Matero A."/>
            <person name="Shah R."/>
            <person name="Swaby I.K."/>
            <person name="O'Shaughnessy A."/>
            <person name="Rodriguez M."/>
            <person name="Hoffman J."/>
            <person name="Till S."/>
            <person name="Granat S."/>
            <person name="Shohdy N."/>
            <person name="Hasegawa A."/>
            <person name="Hameed A."/>
            <person name="Lodhi M."/>
            <person name="Johnson A."/>
            <person name="Chen E."/>
            <person name="Marra M.A."/>
            <person name="Martienssen R."/>
            <person name="McCombie W.R."/>
        </authorList>
    </citation>
    <scope>NUCLEOTIDE SEQUENCE [LARGE SCALE GENOMIC DNA]</scope>
    <source>
        <strain>cv. Columbia</strain>
    </source>
</reference>
<reference key="2">
    <citation type="journal article" date="2017" name="Plant J.">
        <title>Araport11: a complete reannotation of the Arabidopsis thaliana reference genome.</title>
        <authorList>
            <person name="Cheng C.Y."/>
            <person name="Krishnakumar V."/>
            <person name="Chan A.P."/>
            <person name="Thibaud-Nissen F."/>
            <person name="Schobel S."/>
            <person name="Town C.D."/>
        </authorList>
    </citation>
    <scope>GENOME REANNOTATION</scope>
    <source>
        <strain>cv. Columbia</strain>
    </source>
</reference>
<reference key="3">
    <citation type="journal article" date="2003" name="Science">
        <title>Empirical analysis of transcriptional activity in the Arabidopsis genome.</title>
        <authorList>
            <person name="Yamada K."/>
            <person name="Lim J."/>
            <person name="Dale J.M."/>
            <person name="Chen H."/>
            <person name="Shinn P."/>
            <person name="Palm C.J."/>
            <person name="Southwick A.M."/>
            <person name="Wu H.C."/>
            <person name="Kim C.J."/>
            <person name="Nguyen M."/>
            <person name="Pham P.K."/>
            <person name="Cheuk R.F."/>
            <person name="Karlin-Newmann G."/>
            <person name="Liu S.X."/>
            <person name="Lam B."/>
            <person name="Sakano H."/>
            <person name="Wu T."/>
            <person name="Yu G."/>
            <person name="Miranda M."/>
            <person name="Quach H.L."/>
            <person name="Tripp M."/>
            <person name="Chang C.H."/>
            <person name="Lee J.M."/>
            <person name="Toriumi M.J."/>
            <person name="Chan M.M."/>
            <person name="Tang C.C."/>
            <person name="Onodera C.S."/>
            <person name="Deng J.M."/>
            <person name="Akiyama K."/>
            <person name="Ansari Y."/>
            <person name="Arakawa T."/>
            <person name="Banh J."/>
            <person name="Banno F."/>
            <person name="Bowser L."/>
            <person name="Brooks S.Y."/>
            <person name="Carninci P."/>
            <person name="Chao Q."/>
            <person name="Choy N."/>
            <person name="Enju A."/>
            <person name="Goldsmith A.D."/>
            <person name="Gurjal M."/>
            <person name="Hansen N.F."/>
            <person name="Hayashizaki Y."/>
            <person name="Johnson-Hopson C."/>
            <person name="Hsuan V.W."/>
            <person name="Iida K."/>
            <person name="Karnes M."/>
            <person name="Khan S."/>
            <person name="Koesema E."/>
            <person name="Ishida J."/>
            <person name="Jiang P.X."/>
            <person name="Jones T."/>
            <person name="Kawai J."/>
            <person name="Kamiya A."/>
            <person name="Meyers C."/>
            <person name="Nakajima M."/>
            <person name="Narusaka M."/>
            <person name="Seki M."/>
            <person name="Sakurai T."/>
            <person name="Satou M."/>
            <person name="Tamse R."/>
            <person name="Vaysberg M."/>
            <person name="Wallender E.K."/>
            <person name="Wong C."/>
            <person name="Yamamura Y."/>
            <person name="Yuan S."/>
            <person name="Shinozaki K."/>
            <person name="Davis R.W."/>
            <person name="Theologis A."/>
            <person name="Ecker J.R."/>
        </authorList>
    </citation>
    <scope>NUCLEOTIDE SEQUENCE [LARGE SCALE MRNA]</scope>
    <source>
        <strain>cv. Columbia</strain>
    </source>
</reference>
<reference key="4">
    <citation type="submission" date="2002-03" db="EMBL/GenBank/DDBJ databases">
        <title>Full-length cDNA from Arabidopsis thaliana.</title>
        <authorList>
            <person name="Brover V.V."/>
            <person name="Troukhan M.E."/>
            <person name="Alexandrov N.A."/>
            <person name="Lu Y.-P."/>
            <person name="Flavell R.B."/>
            <person name="Feldmann K.A."/>
        </authorList>
    </citation>
    <scope>NUCLEOTIDE SEQUENCE [LARGE SCALE MRNA]</scope>
</reference>
<reference key="5">
    <citation type="submission" date="2005-01" db="EMBL/GenBank/DDBJ databases">
        <title>Arabidopsis ORF clones.</title>
        <authorList>
            <person name="Cheuk R.F."/>
            <person name="Chen H."/>
            <person name="Kim C.J."/>
            <person name="Shinn P."/>
            <person name="Ecker J.R."/>
        </authorList>
    </citation>
    <scope>NUCLEOTIDE SEQUENCE [LARGE SCALE MRNA]</scope>
    <source>
        <strain>cv. Columbia</strain>
    </source>
</reference>
<reference key="6">
    <citation type="journal article" date="2006" name="Plant Physiol.">
        <title>Protein profiling of plastoglobules in chloroplasts and chromoplasts. A surprising site for differential accumulation of metabolic enzymes.</title>
        <authorList>
            <person name="Ytterberg A.J."/>
            <person name="Peltier J.-B."/>
            <person name="van Wijk K.J."/>
        </authorList>
    </citation>
    <scope>IDENTIFICATION BY MASS SPECTROMETRY</scope>
    <scope>SUBCELLULAR LOCATION [LARGE SCALE ANALYSIS]</scope>
    <source>
        <strain>cv. Columbia</strain>
    </source>
</reference>
<reference key="7">
    <citation type="journal article" date="2010" name="Plant J.">
        <title>Plant lipid-associated fibrillin proteins condition jasmonate production under photosynthetic stress.</title>
        <authorList>
            <person name="Youssef A."/>
            <person name="Laizet Y."/>
            <person name="Block M.A."/>
            <person name="Marechal E."/>
            <person name="Alcaraz J.P."/>
            <person name="Larson T.R."/>
            <person name="Pontier D."/>
            <person name="Gaffe J."/>
            <person name="Kuntz M."/>
        </authorList>
    </citation>
    <scope>FUNCTION</scope>
</reference>
<reference key="8">
    <citation type="journal article" date="2011" name="Trends Plant Sci.">
        <title>Fibrillin protein function: the tip of the iceberg?</title>
        <authorList>
            <person name="Singh D.K."/>
            <person name="McNellis T.W."/>
        </authorList>
    </citation>
    <scope>GENE FAMILY</scope>
    <scope>NOMENCLATURE</scope>
</reference>
<reference key="9">
    <citation type="journal article" date="2012" name="Plant Physiol.">
        <title>The functional network of the Arabidopsis plastoglobule proteome based on quantitative proteomics and genome-wide coexpression analysis.</title>
        <authorList>
            <person name="Lundquist P.K."/>
            <person name="Poliakov A."/>
            <person name="Bhuiyan N.H."/>
            <person name="Zybailov B."/>
            <person name="Sun Q."/>
            <person name="van Wijk K.J."/>
        </authorList>
    </citation>
    <scope>IDENTIFICATION BY MASS SPECTROMETRY</scope>
    <scope>SUBCELLULAR LOCATION [LARGE SCALE ANALYSIS]</scope>
    <source>
        <strain>cv. Columbia</strain>
    </source>
</reference>
<dbReference type="EMBL" id="AL021712">
    <property type="protein sequence ID" value="CAA16774.1"/>
    <property type="molecule type" value="Genomic_DNA"/>
</dbReference>
<dbReference type="EMBL" id="AL161556">
    <property type="protein sequence ID" value="CAB79179.1"/>
    <property type="molecule type" value="Genomic_DNA"/>
</dbReference>
<dbReference type="EMBL" id="CP002687">
    <property type="protein sequence ID" value="AEE84581.1"/>
    <property type="molecule type" value="Genomic_DNA"/>
</dbReference>
<dbReference type="EMBL" id="AY074581">
    <property type="protein sequence ID" value="AAL67120.1"/>
    <property type="molecule type" value="mRNA"/>
</dbReference>
<dbReference type="EMBL" id="AY084549">
    <property type="protein sequence ID" value="AAM67287.1"/>
    <property type="molecule type" value="mRNA"/>
</dbReference>
<dbReference type="EMBL" id="BT020429">
    <property type="protein sequence ID" value="AAW28556.1"/>
    <property type="molecule type" value="mRNA"/>
</dbReference>
<dbReference type="EMBL" id="BT020480">
    <property type="protein sequence ID" value="AAW38981.1"/>
    <property type="molecule type" value="mRNA"/>
</dbReference>
<dbReference type="PIR" id="T04905">
    <property type="entry name" value="T04905"/>
</dbReference>
<dbReference type="RefSeq" id="NP_193955.1">
    <property type="nucleotide sequence ID" value="NM_118350.3"/>
</dbReference>
<dbReference type="SMR" id="O49629"/>
<dbReference type="BioGRID" id="13608">
    <property type="interactions" value="15"/>
</dbReference>
<dbReference type="FunCoup" id="O49629">
    <property type="interactions" value="458"/>
</dbReference>
<dbReference type="IntAct" id="O49629">
    <property type="interactions" value="14"/>
</dbReference>
<dbReference type="MINT" id="O49629"/>
<dbReference type="STRING" id="3702.O49629"/>
<dbReference type="GlyGen" id="O49629">
    <property type="glycosylation" value="1 site"/>
</dbReference>
<dbReference type="iPTMnet" id="O49629"/>
<dbReference type="PaxDb" id="3702-AT4G22240.1"/>
<dbReference type="ProteomicsDB" id="226052"/>
<dbReference type="EnsemblPlants" id="AT4G22240.1">
    <property type="protein sequence ID" value="AT4G22240.1"/>
    <property type="gene ID" value="AT4G22240"/>
</dbReference>
<dbReference type="GeneID" id="828319"/>
<dbReference type="Gramene" id="AT4G22240.1">
    <property type="protein sequence ID" value="AT4G22240.1"/>
    <property type="gene ID" value="AT4G22240"/>
</dbReference>
<dbReference type="KEGG" id="ath:AT4G22240"/>
<dbReference type="Araport" id="AT4G22240"/>
<dbReference type="TAIR" id="AT4G22240">
    <property type="gene designation" value="FBN1B"/>
</dbReference>
<dbReference type="eggNOG" id="ENOG502QS2T">
    <property type="taxonomic scope" value="Eukaryota"/>
</dbReference>
<dbReference type="HOGENOM" id="CLU_045041_1_0_1"/>
<dbReference type="InParanoid" id="O49629"/>
<dbReference type="OMA" id="QATNYDK"/>
<dbReference type="PhylomeDB" id="O49629"/>
<dbReference type="CD-CODE" id="4299E36E">
    <property type="entry name" value="Nucleolus"/>
</dbReference>
<dbReference type="PRO" id="PR:O49629"/>
<dbReference type="Proteomes" id="UP000006548">
    <property type="component" value="Chromosome 4"/>
</dbReference>
<dbReference type="ExpressionAtlas" id="O49629">
    <property type="expression patterns" value="baseline and differential"/>
</dbReference>
<dbReference type="GO" id="GO:0009507">
    <property type="term" value="C:chloroplast"/>
    <property type="evidence" value="ECO:0000314"/>
    <property type="project" value="CACAO"/>
</dbReference>
<dbReference type="GO" id="GO:0009534">
    <property type="term" value="C:chloroplast thylakoid"/>
    <property type="evidence" value="ECO:0007005"/>
    <property type="project" value="TAIR"/>
</dbReference>
<dbReference type="GO" id="GO:0009535">
    <property type="term" value="C:chloroplast thylakoid membrane"/>
    <property type="evidence" value="ECO:0007005"/>
    <property type="project" value="TAIR"/>
</dbReference>
<dbReference type="GO" id="GO:0005829">
    <property type="term" value="C:cytosol"/>
    <property type="evidence" value="ECO:0007005"/>
    <property type="project" value="TAIR"/>
</dbReference>
<dbReference type="GO" id="GO:0005739">
    <property type="term" value="C:mitochondrion"/>
    <property type="evidence" value="ECO:0000314"/>
    <property type="project" value="CACAO"/>
</dbReference>
<dbReference type="GO" id="GO:0009536">
    <property type="term" value="C:plastid"/>
    <property type="evidence" value="ECO:0000314"/>
    <property type="project" value="TAIR"/>
</dbReference>
<dbReference type="GO" id="GO:0010287">
    <property type="term" value="C:plastoglobule"/>
    <property type="evidence" value="ECO:0007005"/>
    <property type="project" value="TAIR"/>
</dbReference>
<dbReference type="GO" id="GO:0009579">
    <property type="term" value="C:thylakoid"/>
    <property type="evidence" value="ECO:0007005"/>
    <property type="project" value="TAIR"/>
</dbReference>
<dbReference type="GO" id="GO:0031977">
    <property type="term" value="C:thylakoid lumen"/>
    <property type="evidence" value="ECO:0007005"/>
    <property type="project" value="TAIR"/>
</dbReference>
<dbReference type="InterPro" id="IPR039633">
    <property type="entry name" value="PAP"/>
</dbReference>
<dbReference type="InterPro" id="IPR006843">
    <property type="entry name" value="PAP/fibrillin_dom"/>
</dbReference>
<dbReference type="PANTHER" id="PTHR31906">
    <property type="entry name" value="PLASTID-LIPID-ASSOCIATED PROTEIN 4, CHLOROPLASTIC-RELATED"/>
    <property type="match status" value="1"/>
</dbReference>
<dbReference type="Pfam" id="PF04755">
    <property type="entry name" value="PAP_fibrillin"/>
    <property type="match status" value="1"/>
</dbReference>
<keyword id="KW-0150">Chloroplast</keyword>
<keyword id="KW-0175">Coiled coil</keyword>
<keyword id="KW-0597">Phosphoprotein</keyword>
<keyword id="KW-0934">Plastid</keyword>
<keyword id="KW-1185">Reference proteome</keyword>
<keyword id="KW-0809">Transit peptide</keyword>
<feature type="transit peptide" description="Chloroplast" evidence="2">
    <location>
        <begin position="1"/>
        <end position="59"/>
    </location>
</feature>
<feature type="chain" id="PRO_0000023209" description="Probable plastid-lipid-associated protein 2, chloroplastic">
    <location>
        <begin position="60"/>
        <end position="310"/>
    </location>
</feature>
<feature type="coiled-coil region" evidence="2">
    <location>
        <begin position="65"/>
        <end position="94"/>
    </location>
</feature>
<feature type="modified residue" description="Phosphothreonine" evidence="1">
    <location>
        <position position="61"/>
    </location>
</feature>
<feature type="sequence conflict" description="In Ref. 4; AAM67287." evidence="6" ref="4">
    <original>S</original>
    <variation>R</variation>
    <location>
        <position position="11"/>
    </location>
</feature>
<feature type="sequence conflict" description="In Ref. 3; AAL67120." evidence="6" ref="3">
    <original>P</original>
    <variation>L</variation>
    <location>
        <position position="41"/>
    </location>
</feature>
<feature type="sequence conflict" description="In Ref. 4; AAM67287." evidence="6" ref="4">
    <original>Y</original>
    <variation>C</variation>
    <location>
        <position position="142"/>
    </location>
</feature>
<feature type="sequence conflict" description="In Ref. 3; AAL67120." evidence="6" ref="3">
    <original>S</original>
    <variation>F</variation>
    <location>
        <position position="268"/>
    </location>
</feature>